<proteinExistence type="evidence at transcript level"/>
<accession>P52902</accession>
<comment type="function">
    <text>The pyruvate dehydrogenase complex catalyzes the overall conversion of pyruvate to acetyl-CoA and CO(2). It contains multiple copies of three enzymatic components: pyruvate dehydrogenase (E1), dihydrolipoamide acetyltransferase (E2) and lipoamide dehydrogenase (E3).</text>
</comment>
<comment type="catalytic activity">
    <reaction>
        <text>N(6)-[(R)-lipoyl]-L-lysyl-[protein] + pyruvate + H(+) = N(6)-[(R)-S(8)-acetyldihydrolipoyl]-L-lysyl-[protein] + CO2</text>
        <dbReference type="Rhea" id="RHEA:19189"/>
        <dbReference type="Rhea" id="RHEA-COMP:10474"/>
        <dbReference type="Rhea" id="RHEA-COMP:10478"/>
        <dbReference type="ChEBI" id="CHEBI:15361"/>
        <dbReference type="ChEBI" id="CHEBI:15378"/>
        <dbReference type="ChEBI" id="CHEBI:16526"/>
        <dbReference type="ChEBI" id="CHEBI:83099"/>
        <dbReference type="ChEBI" id="CHEBI:83111"/>
        <dbReference type="EC" id="1.2.4.1"/>
    </reaction>
</comment>
<comment type="cofactor">
    <cofactor evidence="2">
        <name>thiamine diphosphate</name>
        <dbReference type="ChEBI" id="CHEBI:58937"/>
    </cofactor>
    <cofactor evidence="2">
        <name>Mg(2+)</name>
        <dbReference type="ChEBI" id="CHEBI:18420"/>
    </cofactor>
</comment>
<comment type="activity regulation">
    <text evidence="1">E1 activity is regulated by phosphorylation (inactivation) and dephosphorylation (activation) of the alpha subunit.</text>
</comment>
<comment type="subunit">
    <text evidence="1">Tetramer of 2 alpha and 2 beta subunits.</text>
</comment>
<comment type="subcellular location">
    <subcellularLocation>
        <location>Mitochondrion matrix</location>
    </subcellularLocation>
</comment>
<feature type="transit peptide" description="Mitochondrion" evidence="3">
    <location>
        <begin position="1"/>
        <end status="unknown"/>
    </location>
</feature>
<feature type="chain" id="PRO_0000020454" description="Pyruvate dehydrogenase E1 component subunit alpha, mitochondrial">
    <location>
        <begin status="unknown"/>
        <end position="397"/>
    </location>
</feature>
<feature type="binding site" evidence="2">
    <location>
        <position position="98"/>
    </location>
    <ligand>
        <name>pyruvate</name>
        <dbReference type="ChEBI" id="CHEBI:15361"/>
    </ligand>
</feature>
<feature type="binding site" evidence="2">
    <location>
        <position position="124"/>
    </location>
    <ligand>
        <name>pyruvate</name>
        <dbReference type="ChEBI" id="CHEBI:15361"/>
    </ligand>
</feature>
<feature type="binding site" evidence="2">
    <location>
        <position position="124"/>
    </location>
    <ligand>
        <name>thiamine diphosphate</name>
        <dbReference type="ChEBI" id="CHEBI:58937"/>
        <note>ligand shared with beta subunit</note>
    </ligand>
</feature>
<feature type="binding site" evidence="2">
    <location>
        <position position="125"/>
    </location>
    <ligand>
        <name>pyruvate</name>
        <dbReference type="ChEBI" id="CHEBI:15361"/>
    </ligand>
</feature>
<feature type="binding site" evidence="2">
    <location>
        <position position="125"/>
    </location>
    <ligand>
        <name>thiamine diphosphate</name>
        <dbReference type="ChEBI" id="CHEBI:58937"/>
        <note>ligand shared with beta subunit</note>
    </ligand>
</feature>
<feature type="binding site" evidence="2">
    <location>
        <position position="173"/>
    </location>
    <ligand>
        <name>pyruvate</name>
        <dbReference type="ChEBI" id="CHEBI:15361"/>
    </ligand>
</feature>
<feature type="binding site" evidence="2">
    <location>
        <position position="173"/>
    </location>
    <ligand>
        <name>thiamine diphosphate</name>
        <dbReference type="ChEBI" id="CHEBI:58937"/>
        <note>ligand shared with beta subunit</note>
    </ligand>
</feature>
<feature type="binding site" evidence="2">
    <location>
        <position position="175"/>
    </location>
    <ligand>
        <name>pyruvate</name>
        <dbReference type="ChEBI" id="CHEBI:15361"/>
    </ligand>
</feature>
<feature type="binding site" evidence="2">
    <location>
        <position position="175"/>
    </location>
    <ligand>
        <name>thiamine diphosphate</name>
        <dbReference type="ChEBI" id="CHEBI:58937"/>
        <note>ligand shared with beta subunit</note>
    </ligand>
</feature>
<feature type="binding site" evidence="2">
    <location>
        <position position="204"/>
    </location>
    <ligand>
        <name>Mg(2+)</name>
        <dbReference type="ChEBI" id="CHEBI:18420"/>
    </ligand>
</feature>
<feature type="binding site" evidence="2">
    <location>
        <position position="204"/>
    </location>
    <ligand>
        <name>pyruvate</name>
        <dbReference type="ChEBI" id="CHEBI:15361"/>
    </ligand>
</feature>
<feature type="binding site" evidence="2">
    <location>
        <position position="204"/>
    </location>
    <ligand>
        <name>thiamine diphosphate</name>
        <dbReference type="ChEBI" id="CHEBI:58937"/>
        <note>ligand shared with beta subunit</note>
    </ligand>
</feature>
<feature type="binding site" evidence="2">
    <location>
        <position position="205"/>
    </location>
    <ligand>
        <name>pyruvate</name>
        <dbReference type="ChEBI" id="CHEBI:15361"/>
    </ligand>
</feature>
<feature type="binding site" evidence="2">
    <location>
        <position position="205"/>
    </location>
    <ligand>
        <name>thiamine diphosphate</name>
        <dbReference type="ChEBI" id="CHEBI:58937"/>
        <note>ligand shared with beta subunit</note>
    </ligand>
</feature>
<feature type="binding site" evidence="2">
    <location>
        <position position="206"/>
    </location>
    <ligand>
        <name>pyruvate</name>
        <dbReference type="ChEBI" id="CHEBI:15361"/>
    </ligand>
</feature>
<feature type="binding site" evidence="2">
    <location>
        <position position="206"/>
    </location>
    <ligand>
        <name>thiamine diphosphate</name>
        <dbReference type="ChEBI" id="CHEBI:58937"/>
        <note>ligand shared with beta subunit</note>
    </ligand>
</feature>
<feature type="binding site" evidence="2">
    <location>
        <position position="233"/>
    </location>
    <ligand>
        <name>Mg(2+)</name>
        <dbReference type="ChEBI" id="CHEBI:18420"/>
    </ligand>
</feature>
<feature type="binding site" evidence="2">
    <location>
        <position position="233"/>
    </location>
    <ligand>
        <name>pyruvate</name>
        <dbReference type="ChEBI" id="CHEBI:15361"/>
    </ligand>
</feature>
<feature type="binding site" evidence="2">
    <location>
        <position position="233"/>
    </location>
    <ligand>
        <name>thiamine diphosphate</name>
        <dbReference type="ChEBI" id="CHEBI:58937"/>
        <note>ligand shared with beta subunit</note>
    </ligand>
</feature>
<feature type="binding site" evidence="2">
    <location>
        <position position="235"/>
    </location>
    <ligand>
        <name>Mg(2+)</name>
        <dbReference type="ChEBI" id="CHEBI:18420"/>
    </ligand>
</feature>
<feature type="binding site" evidence="2">
    <location>
        <position position="235"/>
    </location>
    <ligand>
        <name>pyruvate</name>
        <dbReference type="ChEBI" id="CHEBI:15361"/>
    </ligand>
</feature>
<feature type="binding site" evidence="2">
    <location>
        <position position="299"/>
    </location>
    <ligand>
        <name>thiamine diphosphate</name>
        <dbReference type="ChEBI" id="CHEBI:58937"/>
        <note>ligand shared with beta subunit</note>
    </ligand>
</feature>
<reference key="1">
    <citation type="submission" date="1996-05" db="EMBL/GenBank/DDBJ databases">
        <authorList>
            <person name="Luethy M.H."/>
            <person name="Miernyk J.A."/>
            <person name="Randall D.D."/>
        </authorList>
    </citation>
    <scope>NUCLEOTIDE SEQUENCE [MRNA]</scope>
</reference>
<protein>
    <recommendedName>
        <fullName>Pyruvate dehydrogenase E1 component subunit alpha, mitochondrial</fullName>
        <shortName>PDHE1-A</shortName>
        <ecNumber>1.2.4.1</ecNumber>
    </recommendedName>
</protein>
<organism>
    <name type="scientific">Pisum sativum</name>
    <name type="common">Garden pea</name>
    <name type="synonym">Lathyrus oleraceus</name>
    <dbReference type="NCBI Taxonomy" id="3888"/>
    <lineage>
        <taxon>Eukaryota</taxon>
        <taxon>Viridiplantae</taxon>
        <taxon>Streptophyta</taxon>
        <taxon>Embryophyta</taxon>
        <taxon>Tracheophyta</taxon>
        <taxon>Spermatophyta</taxon>
        <taxon>Magnoliopsida</taxon>
        <taxon>eudicotyledons</taxon>
        <taxon>Gunneridae</taxon>
        <taxon>Pentapetalae</taxon>
        <taxon>rosids</taxon>
        <taxon>fabids</taxon>
        <taxon>Fabales</taxon>
        <taxon>Fabaceae</taxon>
        <taxon>Papilionoideae</taxon>
        <taxon>50 kb inversion clade</taxon>
        <taxon>NPAAA clade</taxon>
        <taxon>Hologalegina</taxon>
        <taxon>IRL clade</taxon>
        <taxon>Fabeae</taxon>
        <taxon>Pisum</taxon>
    </lineage>
</organism>
<keyword id="KW-0460">Magnesium</keyword>
<keyword id="KW-0479">Metal-binding</keyword>
<keyword id="KW-0496">Mitochondrion</keyword>
<keyword id="KW-0560">Oxidoreductase</keyword>
<keyword id="KW-0597">Phosphoprotein</keyword>
<keyword id="KW-0670">Pyruvate</keyword>
<keyword id="KW-0786">Thiamine pyrophosphate</keyword>
<keyword id="KW-0809">Transit peptide</keyword>
<name>ODPA_PEA</name>
<dbReference type="EC" id="1.2.4.1"/>
<dbReference type="EMBL" id="U51918">
    <property type="protein sequence ID" value="AAA97411.1"/>
    <property type="molecule type" value="mRNA"/>
</dbReference>
<dbReference type="PIR" id="T06531">
    <property type="entry name" value="T06531"/>
</dbReference>
<dbReference type="SMR" id="P52902"/>
<dbReference type="IntAct" id="P52902">
    <property type="interactions" value="1"/>
</dbReference>
<dbReference type="BindingDB" id="P52902"/>
<dbReference type="ChEMBL" id="CHEMBL2366570"/>
<dbReference type="ChEMBL" id="CHEMBL2366571"/>
<dbReference type="BRENDA" id="1.2.1.104">
    <property type="organism ID" value="4872"/>
</dbReference>
<dbReference type="SABIO-RK" id="P52902"/>
<dbReference type="GO" id="GO:0005759">
    <property type="term" value="C:mitochondrial matrix"/>
    <property type="evidence" value="ECO:0007669"/>
    <property type="project" value="UniProtKB-SubCell"/>
</dbReference>
<dbReference type="GO" id="GO:0046872">
    <property type="term" value="F:metal ion binding"/>
    <property type="evidence" value="ECO:0007669"/>
    <property type="project" value="UniProtKB-KW"/>
</dbReference>
<dbReference type="GO" id="GO:0004739">
    <property type="term" value="F:pyruvate dehydrogenase (acetyl-transferring) activity"/>
    <property type="evidence" value="ECO:0007669"/>
    <property type="project" value="UniProtKB-EC"/>
</dbReference>
<dbReference type="GO" id="GO:0006086">
    <property type="term" value="P:pyruvate decarboxylation to acetyl-CoA"/>
    <property type="evidence" value="ECO:0007669"/>
    <property type="project" value="InterPro"/>
</dbReference>
<dbReference type="CDD" id="cd02000">
    <property type="entry name" value="TPP_E1_PDC_ADC_BCADC"/>
    <property type="match status" value="1"/>
</dbReference>
<dbReference type="FunFam" id="3.40.50.970:FF:000013">
    <property type="entry name" value="Pyruvate dehydrogenase E1 component subunit alpha"/>
    <property type="match status" value="1"/>
</dbReference>
<dbReference type="Gene3D" id="3.40.50.970">
    <property type="match status" value="1"/>
</dbReference>
<dbReference type="InterPro" id="IPR001017">
    <property type="entry name" value="DH_E1"/>
</dbReference>
<dbReference type="InterPro" id="IPR050642">
    <property type="entry name" value="PDH_E1_Alpha_Subunit"/>
</dbReference>
<dbReference type="InterPro" id="IPR017597">
    <property type="entry name" value="Pyrv_DH_E1_asu_subgrp-y"/>
</dbReference>
<dbReference type="InterPro" id="IPR029061">
    <property type="entry name" value="THDP-binding"/>
</dbReference>
<dbReference type="NCBIfam" id="TIGR03182">
    <property type="entry name" value="PDH_E1_alph_y"/>
    <property type="match status" value="1"/>
</dbReference>
<dbReference type="PANTHER" id="PTHR11516:SF60">
    <property type="entry name" value="PYRUVATE DEHYDROGENASE E1 COMPONENT SUBUNIT ALPHA"/>
    <property type="match status" value="1"/>
</dbReference>
<dbReference type="PANTHER" id="PTHR11516">
    <property type="entry name" value="PYRUVATE DEHYDROGENASE E1 COMPONENT, ALPHA SUBUNIT BACTERIAL AND ORGANELLAR"/>
    <property type="match status" value="1"/>
</dbReference>
<dbReference type="Pfam" id="PF00676">
    <property type="entry name" value="E1_dh"/>
    <property type="match status" value="1"/>
</dbReference>
<dbReference type="SUPFAM" id="SSF52518">
    <property type="entry name" value="Thiamin diphosphate-binding fold (THDP-binding)"/>
    <property type="match status" value="1"/>
</dbReference>
<sequence length="397" mass="43530">MALSRLSSSSSSSNGSNLFNPFSAAFTLNRPISSDTTATLTIETSLPFTAHNCDPPSRSVTTSPSELLSFFRTMALMRRMEIAADSLYKANLIRGFCHLYDGQEAVAVGMEAGTTKKDCIITAYRDHCTFLGRGGTLLRVYAELMGRRDGCSKGKGGSMHFYKKDSGFYGGHGIVGAQVPLGCGLAFGQKYLKDESVTFALYGDGAANQGQLFEALNISALWDLPAILVCENNHYGMGTATWRSAKSPAYFKRGDYVPGLKVDGMDALAVKQACKFAKEHALKNGPIILEMDTYRYHGHSMSDPGSTYRTRDEISGVRQERDPIERVRKLLLSHDIATEKELKDTEKEVRKEVDEAIAKAKDSPMPDPSDLFSNVYVKGYGVEAFGVDRKEVRVTLP</sequence>
<evidence type="ECO:0000250" key="1"/>
<evidence type="ECO:0000250" key="2">
    <source>
        <dbReference type="UniProtKB" id="P08559"/>
    </source>
</evidence>
<evidence type="ECO:0000255" key="3"/>